<accession>A1A171</accession>
<feature type="chain" id="PRO_0000305797" description="Bifunctional protein FolD">
    <location>
        <begin position="1"/>
        <end position="291"/>
    </location>
</feature>
<feature type="binding site" evidence="1">
    <location>
        <begin position="168"/>
        <end position="170"/>
    </location>
    <ligand>
        <name>NADP(+)</name>
        <dbReference type="ChEBI" id="CHEBI:58349"/>
    </ligand>
</feature>
<feature type="binding site" evidence="1">
    <location>
        <position position="195"/>
    </location>
    <ligand>
        <name>NADP(+)</name>
        <dbReference type="ChEBI" id="CHEBI:58349"/>
    </ligand>
</feature>
<feature type="binding site" evidence="1">
    <location>
        <position position="236"/>
    </location>
    <ligand>
        <name>NADP(+)</name>
        <dbReference type="ChEBI" id="CHEBI:58349"/>
    </ligand>
</feature>
<organism>
    <name type="scientific">Bifidobacterium adolescentis (strain ATCC 15703 / DSM 20083 / NCTC 11814 / E194a)</name>
    <dbReference type="NCBI Taxonomy" id="367928"/>
    <lineage>
        <taxon>Bacteria</taxon>
        <taxon>Bacillati</taxon>
        <taxon>Actinomycetota</taxon>
        <taxon>Actinomycetes</taxon>
        <taxon>Bifidobacteriales</taxon>
        <taxon>Bifidobacteriaceae</taxon>
        <taxon>Bifidobacterium</taxon>
    </lineage>
</organism>
<sequence length="291" mass="31278">MGTRIDGKKVAARTKADLAKRVELLKARGIQPGLGTILVGSDPGSVKYVAGKHADCAEIGVNSIKRELPENATFDQVADAVRQLNADPACTGYIVQLPLPRGIDENAIIDLIDPKKDADGMHPYNLGELVLHARGDITTPLPCTPRGVIELLRAYDIDLDGKEVCVLGRGITIGRTIGLLLTRKAVNATVTLCHTGTKDVRDHMRRADVIVAAMGVAGFVKPEDIKEGSILVDVGVSRVFDEESGRYKVKGDVDKACYEKAFAYTPNPGGVGPMTRAMLLQNVVEMAERQL</sequence>
<protein>
    <recommendedName>
        <fullName evidence="1">Bifunctional protein FolD</fullName>
    </recommendedName>
    <domain>
        <recommendedName>
            <fullName evidence="1">Methylenetetrahydrofolate dehydrogenase</fullName>
            <ecNumber evidence="1">1.5.1.5</ecNumber>
        </recommendedName>
    </domain>
    <domain>
        <recommendedName>
            <fullName evidence="1">Methenyltetrahydrofolate cyclohydrolase</fullName>
            <ecNumber evidence="1">3.5.4.9</ecNumber>
        </recommendedName>
    </domain>
</protein>
<keyword id="KW-0028">Amino-acid biosynthesis</keyword>
<keyword id="KW-0368">Histidine biosynthesis</keyword>
<keyword id="KW-0378">Hydrolase</keyword>
<keyword id="KW-0486">Methionine biosynthesis</keyword>
<keyword id="KW-0511">Multifunctional enzyme</keyword>
<keyword id="KW-0521">NADP</keyword>
<keyword id="KW-0554">One-carbon metabolism</keyword>
<keyword id="KW-0560">Oxidoreductase</keyword>
<keyword id="KW-0658">Purine biosynthesis</keyword>
<keyword id="KW-1185">Reference proteome</keyword>
<gene>
    <name evidence="1" type="primary">folD</name>
    <name type="ordered locus">BAD_0673</name>
</gene>
<proteinExistence type="inferred from homology"/>
<evidence type="ECO:0000255" key="1">
    <source>
        <dbReference type="HAMAP-Rule" id="MF_01576"/>
    </source>
</evidence>
<reference key="1">
    <citation type="submission" date="2006-12" db="EMBL/GenBank/DDBJ databases">
        <title>Bifidobacterium adolescentis complete genome sequence.</title>
        <authorList>
            <person name="Suzuki T."/>
            <person name="Tsuda Y."/>
            <person name="Kanou N."/>
            <person name="Inoue T."/>
            <person name="Kumazaki K."/>
            <person name="Nagano S."/>
            <person name="Hirai S."/>
            <person name="Tanaka K."/>
            <person name="Watanabe K."/>
        </authorList>
    </citation>
    <scope>NUCLEOTIDE SEQUENCE [LARGE SCALE GENOMIC DNA]</scope>
    <source>
        <strain>ATCC 15703 / DSM 20083 / NCTC 11814 / E194a</strain>
    </source>
</reference>
<name>FOLD_BIFAA</name>
<dbReference type="EC" id="1.5.1.5" evidence="1"/>
<dbReference type="EC" id="3.5.4.9" evidence="1"/>
<dbReference type="EMBL" id="AP009256">
    <property type="protein sequence ID" value="BAF39454.1"/>
    <property type="molecule type" value="Genomic_DNA"/>
</dbReference>
<dbReference type="RefSeq" id="WP_011743094.1">
    <property type="nucleotide sequence ID" value="NC_008618.1"/>
</dbReference>
<dbReference type="SMR" id="A1A171"/>
<dbReference type="STRING" id="367928.BAD_0673"/>
<dbReference type="PaxDb" id="1680-BADO_0717"/>
<dbReference type="GeneID" id="4556973"/>
<dbReference type="KEGG" id="bad:BAD_0673"/>
<dbReference type="HOGENOM" id="CLU_034045_3_0_11"/>
<dbReference type="UniPathway" id="UPA00193"/>
<dbReference type="Proteomes" id="UP000008702">
    <property type="component" value="Chromosome"/>
</dbReference>
<dbReference type="GO" id="GO:0005829">
    <property type="term" value="C:cytosol"/>
    <property type="evidence" value="ECO:0007669"/>
    <property type="project" value="TreeGrafter"/>
</dbReference>
<dbReference type="GO" id="GO:0004477">
    <property type="term" value="F:methenyltetrahydrofolate cyclohydrolase activity"/>
    <property type="evidence" value="ECO:0007669"/>
    <property type="project" value="UniProtKB-UniRule"/>
</dbReference>
<dbReference type="GO" id="GO:0004488">
    <property type="term" value="F:methylenetetrahydrofolate dehydrogenase (NADP+) activity"/>
    <property type="evidence" value="ECO:0007669"/>
    <property type="project" value="UniProtKB-UniRule"/>
</dbReference>
<dbReference type="GO" id="GO:0000105">
    <property type="term" value="P:L-histidine biosynthetic process"/>
    <property type="evidence" value="ECO:0007669"/>
    <property type="project" value="UniProtKB-KW"/>
</dbReference>
<dbReference type="GO" id="GO:0009086">
    <property type="term" value="P:methionine biosynthetic process"/>
    <property type="evidence" value="ECO:0007669"/>
    <property type="project" value="UniProtKB-KW"/>
</dbReference>
<dbReference type="GO" id="GO:0006164">
    <property type="term" value="P:purine nucleotide biosynthetic process"/>
    <property type="evidence" value="ECO:0007669"/>
    <property type="project" value="UniProtKB-KW"/>
</dbReference>
<dbReference type="GO" id="GO:0035999">
    <property type="term" value="P:tetrahydrofolate interconversion"/>
    <property type="evidence" value="ECO:0007669"/>
    <property type="project" value="UniProtKB-UniRule"/>
</dbReference>
<dbReference type="CDD" id="cd01080">
    <property type="entry name" value="NAD_bind_m-THF_DH_Cyclohyd"/>
    <property type="match status" value="1"/>
</dbReference>
<dbReference type="FunFam" id="3.40.50.10860:FF:000005">
    <property type="entry name" value="C-1-tetrahydrofolate synthase, cytoplasmic, putative"/>
    <property type="match status" value="1"/>
</dbReference>
<dbReference type="Gene3D" id="3.40.50.10860">
    <property type="entry name" value="Leucine Dehydrogenase, chain A, domain 1"/>
    <property type="match status" value="1"/>
</dbReference>
<dbReference type="Gene3D" id="3.40.50.720">
    <property type="entry name" value="NAD(P)-binding Rossmann-like Domain"/>
    <property type="match status" value="1"/>
</dbReference>
<dbReference type="HAMAP" id="MF_01576">
    <property type="entry name" value="THF_DHG_CYH"/>
    <property type="match status" value="1"/>
</dbReference>
<dbReference type="InterPro" id="IPR046346">
    <property type="entry name" value="Aminoacid_DH-like_N_sf"/>
</dbReference>
<dbReference type="InterPro" id="IPR036291">
    <property type="entry name" value="NAD(P)-bd_dom_sf"/>
</dbReference>
<dbReference type="InterPro" id="IPR000672">
    <property type="entry name" value="THF_DH/CycHdrlase"/>
</dbReference>
<dbReference type="InterPro" id="IPR020630">
    <property type="entry name" value="THF_DH/CycHdrlase_cat_dom"/>
</dbReference>
<dbReference type="InterPro" id="IPR020631">
    <property type="entry name" value="THF_DH/CycHdrlase_NAD-bd_dom"/>
</dbReference>
<dbReference type="NCBIfam" id="NF010789">
    <property type="entry name" value="PRK14193.1"/>
    <property type="match status" value="1"/>
</dbReference>
<dbReference type="PANTHER" id="PTHR48099:SF5">
    <property type="entry name" value="C-1-TETRAHYDROFOLATE SYNTHASE, CYTOPLASMIC"/>
    <property type="match status" value="1"/>
</dbReference>
<dbReference type="PANTHER" id="PTHR48099">
    <property type="entry name" value="C-1-TETRAHYDROFOLATE SYNTHASE, CYTOPLASMIC-RELATED"/>
    <property type="match status" value="1"/>
</dbReference>
<dbReference type="Pfam" id="PF00763">
    <property type="entry name" value="THF_DHG_CYH"/>
    <property type="match status" value="1"/>
</dbReference>
<dbReference type="Pfam" id="PF02882">
    <property type="entry name" value="THF_DHG_CYH_C"/>
    <property type="match status" value="1"/>
</dbReference>
<dbReference type="PRINTS" id="PR00085">
    <property type="entry name" value="THFDHDRGNASE"/>
</dbReference>
<dbReference type="SUPFAM" id="SSF53223">
    <property type="entry name" value="Aminoacid dehydrogenase-like, N-terminal domain"/>
    <property type="match status" value="1"/>
</dbReference>
<dbReference type="SUPFAM" id="SSF51735">
    <property type="entry name" value="NAD(P)-binding Rossmann-fold domains"/>
    <property type="match status" value="1"/>
</dbReference>
<comment type="function">
    <text evidence="1">Catalyzes the oxidation of 5,10-methylenetetrahydrofolate to 5,10-methenyltetrahydrofolate and then the hydrolysis of 5,10-methenyltetrahydrofolate to 10-formyltetrahydrofolate.</text>
</comment>
<comment type="catalytic activity">
    <reaction evidence="1">
        <text>(6R)-5,10-methylene-5,6,7,8-tetrahydrofolate + NADP(+) = (6R)-5,10-methenyltetrahydrofolate + NADPH</text>
        <dbReference type="Rhea" id="RHEA:22812"/>
        <dbReference type="ChEBI" id="CHEBI:15636"/>
        <dbReference type="ChEBI" id="CHEBI:57455"/>
        <dbReference type="ChEBI" id="CHEBI:57783"/>
        <dbReference type="ChEBI" id="CHEBI:58349"/>
        <dbReference type="EC" id="1.5.1.5"/>
    </reaction>
</comment>
<comment type="catalytic activity">
    <reaction evidence="1">
        <text>(6R)-5,10-methenyltetrahydrofolate + H2O = (6R)-10-formyltetrahydrofolate + H(+)</text>
        <dbReference type="Rhea" id="RHEA:23700"/>
        <dbReference type="ChEBI" id="CHEBI:15377"/>
        <dbReference type="ChEBI" id="CHEBI:15378"/>
        <dbReference type="ChEBI" id="CHEBI:57455"/>
        <dbReference type="ChEBI" id="CHEBI:195366"/>
        <dbReference type="EC" id="3.5.4.9"/>
    </reaction>
</comment>
<comment type="pathway">
    <text evidence="1">One-carbon metabolism; tetrahydrofolate interconversion.</text>
</comment>
<comment type="subunit">
    <text evidence="1">Homodimer.</text>
</comment>
<comment type="similarity">
    <text evidence="1">Belongs to the tetrahydrofolate dehydrogenase/cyclohydrolase family.</text>
</comment>